<organism>
    <name type="scientific">Escherichia coli (strain K12)</name>
    <dbReference type="NCBI Taxonomy" id="83333"/>
    <lineage>
        <taxon>Bacteria</taxon>
        <taxon>Pseudomonadati</taxon>
        <taxon>Pseudomonadota</taxon>
        <taxon>Gammaproteobacteria</taxon>
        <taxon>Enterobacterales</taxon>
        <taxon>Enterobacteriaceae</taxon>
        <taxon>Escherichia</taxon>
    </lineage>
</organism>
<keyword id="KW-0002">3D-structure</keyword>
<keyword id="KW-0067">ATP-binding</keyword>
<keyword id="KW-0436">Ligase</keyword>
<keyword id="KW-0472">Membrane</keyword>
<keyword id="KW-0547">Nucleotide-binding</keyword>
<keyword id="KW-1185">Reference proteome</keyword>
<keyword id="KW-0812">Transmembrane</keyword>
<keyword id="KW-1133">Transmembrane helix</keyword>
<feature type="chain" id="PRO_0000120579" description="tRNA threonylcarbamoyladenosine dehydratase">
    <location>
        <begin position="1"/>
        <end position="268"/>
    </location>
</feature>
<feature type="transmembrane region" description="Helical" evidence="1">
    <location>
        <begin position="237"/>
        <end position="257"/>
    </location>
</feature>
<feature type="helix" evidence="6">
    <location>
        <begin position="7"/>
        <end position="20"/>
    </location>
</feature>
<feature type="helix" evidence="6">
    <location>
        <begin position="22"/>
        <end position="29"/>
    </location>
</feature>
<feature type="strand" evidence="6">
    <location>
        <begin position="32"/>
        <end position="36"/>
    </location>
</feature>
<feature type="helix" evidence="6">
    <location>
        <begin position="42"/>
        <end position="51"/>
    </location>
</feature>
<feature type="strand" evidence="6">
    <location>
        <begin position="55"/>
        <end position="60"/>
    </location>
</feature>
<feature type="helix" evidence="6">
    <location>
        <begin position="67"/>
        <end position="69"/>
    </location>
</feature>
<feature type="turn" evidence="6">
    <location>
        <begin position="70"/>
        <end position="72"/>
    </location>
</feature>
<feature type="helix" evidence="6">
    <location>
        <begin position="78"/>
        <end position="80"/>
    </location>
</feature>
<feature type="helix" evidence="6">
    <location>
        <begin position="85"/>
        <end position="96"/>
    </location>
</feature>
<feature type="strand" evidence="6">
    <location>
        <begin position="101"/>
        <end position="105"/>
    </location>
</feature>
<feature type="turn" evidence="6">
    <location>
        <begin position="111"/>
        <end position="113"/>
    </location>
</feature>
<feature type="helix" evidence="6">
    <location>
        <begin position="114"/>
        <end position="118"/>
    </location>
</feature>
<feature type="strand" evidence="6">
    <location>
        <begin position="123"/>
        <end position="127"/>
    </location>
</feature>
<feature type="helix" evidence="6">
    <location>
        <begin position="132"/>
        <end position="144"/>
    </location>
</feature>
<feature type="strand" evidence="6">
    <location>
        <begin position="149"/>
        <end position="152"/>
    </location>
</feature>
<feature type="helix" evidence="6">
    <location>
        <begin position="161"/>
        <end position="163"/>
    </location>
</feature>
<feature type="strand" evidence="6">
    <location>
        <begin position="164"/>
        <end position="168"/>
    </location>
</feature>
<feature type="helix" evidence="6">
    <location>
        <begin position="169"/>
        <end position="171"/>
    </location>
</feature>
<feature type="helix" evidence="6">
    <location>
        <begin position="176"/>
        <end position="189"/>
    </location>
</feature>
<feature type="strand" evidence="6">
    <location>
        <begin position="202"/>
        <end position="206"/>
    </location>
</feature>
<feature type="strand" evidence="7">
    <location>
        <begin position="219"/>
        <end position="222"/>
    </location>
</feature>
<feature type="helix" evidence="6">
    <location>
        <begin position="242"/>
        <end position="266"/>
    </location>
</feature>
<protein>
    <recommendedName>
        <fullName>tRNA threonylcarbamoyladenosine dehydratase</fullName>
        <ecNumber>6.1.-.-</ecNumber>
    </recommendedName>
    <alternativeName>
        <fullName>t(6)A37 dehydratase</fullName>
    </alternativeName>
</protein>
<dbReference type="EC" id="6.1.-.-"/>
<dbReference type="EMBL" id="U29581">
    <property type="protein sequence ID" value="AAB40462.1"/>
    <property type="molecule type" value="Genomic_DNA"/>
</dbReference>
<dbReference type="EMBL" id="U00096">
    <property type="protein sequence ID" value="AAC75854.1"/>
    <property type="molecule type" value="Genomic_DNA"/>
</dbReference>
<dbReference type="EMBL" id="AP009048">
    <property type="protein sequence ID" value="BAE76884.1"/>
    <property type="molecule type" value="Genomic_DNA"/>
</dbReference>
<dbReference type="PIR" id="H65063">
    <property type="entry name" value="H65063"/>
</dbReference>
<dbReference type="RefSeq" id="NP_417292.1">
    <property type="nucleotide sequence ID" value="NC_000913.3"/>
</dbReference>
<dbReference type="RefSeq" id="WP_000117728.1">
    <property type="nucleotide sequence ID" value="NZ_SSZK01000003.1"/>
</dbReference>
<dbReference type="PDB" id="4D79">
    <property type="method" value="X-ray"/>
    <property type="resolution" value="1.77 A"/>
    <property type="chains" value="A/B/C/D=1-268"/>
</dbReference>
<dbReference type="PDB" id="4D7A">
    <property type="method" value="X-ray"/>
    <property type="resolution" value="1.80 A"/>
    <property type="chains" value="A/B/C/D=1-268"/>
</dbReference>
<dbReference type="PDB" id="4RDH">
    <property type="method" value="X-ray"/>
    <property type="resolution" value="2.10 A"/>
    <property type="chains" value="A/B/C/D=1-268"/>
</dbReference>
<dbReference type="PDB" id="4RDI">
    <property type="method" value="X-ray"/>
    <property type="resolution" value="1.95 A"/>
    <property type="chains" value="A/B/C/D=1-268"/>
</dbReference>
<dbReference type="PDB" id="4YED">
    <property type="method" value="X-ray"/>
    <property type="resolution" value="1.90 A"/>
    <property type="chains" value="A/B/C/D=1-268"/>
</dbReference>
<dbReference type="PDBsum" id="4D79"/>
<dbReference type="PDBsum" id="4D7A"/>
<dbReference type="PDBsum" id="4RDH"/>
<dbReference type="PDBsum" id="4RDI"/>
<dbReference type="PDBsum" id="4YED"/>
<dbReference type="SMR" id="Q46927"/>
<dbReference type="BioGRID" id="4261127">
    <property type="interactions" value="841"/>
</dbReference>
<dbReference type="FunCoup" id="Q46927">
    <property type="interactions" value="77"/>
</dbReference>
<dbReference type="IntAct" id="Q46927">
    <property type="interactions" value="9"/>
</dbReference>
<dbReference type="STRING" id="511145.b2812"/>
<dbReference type="PaxDb" id="511145-b2812"/>
<dbReference type="EnsemblBacteria" id="AAC75854">
    <property type="protein sequence ID" value="AAC75854"/>
    <property type="gene ID" value="b2812"/>
</dbReference>
<dbReference type="GeneID" id="93779186"/>
<dbReference type="GeneID" id="947291"/>
<dbReference type="KEGG" id="ecj:JW2783"/>
<dbReference type="KEGG" id="eco:b2812"/>
<dbReference type="KEGG" id="ecoc:C3026_15455"/>
<dbReference type="PATRIC" id="fig|511145.12.peg.2912"/>
<dbReference type="EchoBASE" id="EB2893"/>
<dbReference type="eggNOG" id="COG1179">
    <property type="taxonomic scope" value="Bacteria"/>
</dbReference>
<dbReference type="HOGENOM" id="CLU_013325_4_0_6"/>
<dbReference type="InParanoid" id="Q46927"/>
<dbReference type="OMA" id="DMDDICV"/>
<dbReference type="OrthoDB" id="9804150at2"/>
<dbReference type="PhylomeDB" id="Q46927"/>
<dbReference type="BioCyc" id="EcoCyc:G7456-MONOMER"/>
<dbReference type="BioCyc" id="MetaCyc:G7456-MONOMER"/>
<dbReference type="EvolutionaryTrace" id="Q46927"/>
<dbReference type="PRO" id="PR:Q46927"/>
<dbReference type="Proteomes" id="UP000000625">
    <property type="component" value="Chromosome"/>
</dbReference>
<dbReference type="GO" id="GO:0016020">
    <property type="term" value="C:membrane"/>
    <property type="evidence" value="ECO:0007669"/>
    <property type="project" value="UniProtKB-SubCell"/>
</dbReference>
<dbReference type="GO" id="GO:0005524">
    <property type="term" value="F:ATP binding"/>
    <property type="evidence" value="ECO:0007669"/>
    <property type="project" value="UniProtKB-KW"/>
</dbReference>
<dbReference type="GO" id="GO:0030955">
    <property type="term" value="F:potassium ion binding"/>
    <property type="evidence" value="ECO:0000314"/>
    <property type="project" value="EcoCyc"/>
</dbReference>
<dbReference type="GO" id="GO:0042803">
    <property type="term" value="F:protein homodimerization activity"/>
    <property type="evidence" value="ECO:0000314"/>
    <property type="project" value="EcoCyc"/>
</dbReference>
<dbReference type="GO" id="GO:0031402">
    <property type="term" value="F:sodium ion binding"/>
    <property type="evidence" value="ECO:0000314"/>
    <property type="project" value="EcoCyc"/>
</dbReference>
<dbReference type="GO" id="GO:0061503">
    <property type="term" value="F:tRNA threonylcarbamoyladenosine dehydratase"/>
    <property type="evidence" value="ECO:0000314"/>
    <property type="project" value="EcoCyc"/>
</dbReference>
<dbReference type="GO" id="GO:0008641">
    <property type="term" value="F:ubiquitin-like modifier activating enzyme activity"/>
    <property type="evidence" value="ECO:0007669"/>
    <property type="project" value="InterPro"/>
</dbReference>
<dbReference type="GO" id="GO:0061504">
    <property type="term" value="P:cyclic threonylcarbamoyladenosine biosynthetic process"/>
    <property type="evidence" value="ECO:0000315"/>
    <property type="project" value="EcoCyc"/>
</dbReference>
<dbReference type="CDD" id="cd00755">
    <property type="entry name" value="YgdL_like"/>
    <property type="match status" value="1"/>
</dbReference>
<dbReference type="FunFam" id="3.40.50.720:FF:000096">
    <property type="entry name" value="tRNA cyclic N6-threonylcarbamoyladenosine(37) synthase TcdA"/>
    <property type="match status" value="1"/>
</dbReference>
<dbReference type="Gene3D" id="3.40.50.720">
    <property type="entry name" value="NAD(P)-binding Rossmann-like Domain"/>
    <property type="match status" value="1"/>
</dbReference>
<dbReference type="InterPro" id="IPR045886">
    <property type="entry name" value="ThiF/MoeB/HesA"/>
</dbReference>
<dbReference type="InterPro" id="IPR000594">
    <property type="entry name" value="ThiF_NAD_FAD-bd"/>
</dbReference>
<dbReference type="InterPro" id="IPR035985">
    <property type="entry name" value="Ubiquitin-activating_enz"/>
</dbReference>
<dbReference type="NCBIfam" id="NF011696">
    <property type="entry name" value="PRK15116.1"/>
    <property type="match status" value="1"/>
</dbReference>
<dbReference type="PANTHER" id="PTHR43267">
    <property type="entry name" value="TRNA THREONYLCARBAMOYLADENOSINE DEHYDRATASE"/>
    <property type="match status" value="1"/>
</dbReference>
<dbReference type="PANTHER" id="PTHR43267:SF1">
    <property type="entry name" value="TRNA THREONYLCARBAMOYLADENOSINE DEHYDRATASE"/>
    <property type="match status" value="1"/>
</dbReference>
<dbReference type="Pfam" id="PF00899">
    <property type="entry name" value="ThiF"/>
    <property type="match status" value="1"/>
</dbReference>
<dbReference type="SUPFAM" id="SSF69572">
    <property type="entry name" value="Activating enzymes of the ubiquitin-like proteins"/>
    <property type="match status" value="1"/>
</dbReference>
<proteinExistence type="evidence at protein level"/>
<accession>Q46927</accession>
<accession>Q2MA22</accession>
<reference key="1">
    <citation type="journal article" date="1997" name="Science">
        <title>The complete genome sequence of Escherichia coli K-12.</title>
        <authorList>
            <person name="Blattner F.R."/>
            <person name="Plunkett G. III"/>
            <person name="Bloch C.A."/>
            <person name="Perna N.T."/>
            <person name="Burland V."/>
            <person name="Riley M."/>
            <person name="Collado-Vides J."/>
            <person name="Glasner J.D."/>
            <person name="Rode C.K."/>
            <person name="Mayhew G.F."/>
            <person name="Gregor J."/>
            <person name="Davis N.W."/>
            <person name="Kirkpatrick H.A."/>
            <person name="Goeden M.A."/>
            <person name="Rose D.J."/>
            <person name="Mau B."/>
            <person name="Shao Y."/>
        </authorList>
    </citation>
    <scope>NUCLEOTIDE SEQUENCE [LARGE SCALE GENOMIC DNA]</scope>
    <source>
        <strain>K12 / MG1655 / ATCC 47076</strain>
    </source>
</reference>
<reference key="2">
    <citation type="journal article" date="2006" name="Mol. Syst. Biol.">
        <title>Highly accurate genome sequences of Escherichia coli K-12 strains MG1655 and W3110.</title>
        <authorList>
            <person name="Hayashi K."/>
            <person name="Morooka N."/>
            <person name="Yamamoto Y."/>
            <person name="Fujita K."/>
            <person name="Isono K."/>
            <person name="Choi S."/>
            <person name="Ohtsubo E."/>
            <person name="Baba T."/>
            <person name="Wanner B.L."/>
            <person name="Mori H."/>
            <person name="Horiuchi T."/>
        </authorList>
    </citation>
    <scope>NUCLEOTIDE SEQUENCE [LARGE SCALE GENOMIC DNA]</scope>
    <source>
        <strain>K12 / W3110 / ATCC 27325 / DSM 5911</strain>
    </source>
</reference>
<reference key="3">
    <citation type="journal article" date="2009" name="Mol. Microbiol.">
        <title>The CsdA cysteine desulphurase promotes Fe/S biogenesis by recruiting Suf components and participates in a new sulphur transfer pathway by recruiting CsdL (ex-YgdL), a ubiquitin-modifying-like protein.</title>
        <authorList>
            <person name="Trotter V."/>
            <person name="Vinella D."/>
            <person name="Loiseau L."/>
            <person name="Ollagnier de Choudens S."/>
            <person name="Fontecave M."/>
            <person name="Barras F."/>
        </authorList>
    </citation>
    <scope>FUNCTION AS A SULFUR ACCEPTOR PROTEIN</scope>
    <scope>INTERACTION WITH CSDE</scope>
    <scope>DISRUPTION PHENOTYPE</scope>
    <source>
        <strain>K12 / MG1655 / ATCC 47076</strain>
    </source>
</reference>
<reference key="4">
    <citation type="journal article" date="2013" name="Nat. Chem. Biol.">
        <title>A cyclic form of N6-threonylcarbamoyladenosine as a widely distributed tRNA hypermodification.</title>
        <authorList>
            <person name="Miyauchi K."/>
            <person name="Kimura S."/>
            <person name="Suzuki T."/>
        </authorList>
    </citation>
    <scope>IDENTIFICATION</scope>
    <scope>FUNCTION AS T(6)A DEHYDRATASE</scope>
    <scope>CATALYTIC ACTIVITY</scope>
    <scope>GENE NAME</scope>
    <scope>DISRUPTION PHENOTYPE</scope>
</reference>
<sequence>MSVVISDAWRQRFGGTARLYGEKALQLFADAHICVVGIGGVGSWAAEALARTGIGAITLIDMDDVCVTNTNRQIHALRDNVGLAKAEVMAERIRQINPECRVTVVDDFVTPDNVAQYMSVGYSYVIDAIDSVRPKAALIAYCRRNKIPLVTTGGAGGQIDPTQIQVTDLAKTIQDPLAAKLRERLKSDFGVVKNSKGKLGVDCVFSTEALVYPQSDGTVCAMKATAEGPKRMDCASGFGAATMVTATFGFVAVSHALKKMMAKAARQG</sequence>
<gene>
    <name type="primary">tcdA</name>
    <name type="synonym">csdL</name>
    <name type="synonym">ygdL</name>
    <name type="ordered locus">b2812</name>
    <name type="ordered locus">JW2783</name>
</gene>
<comment type="function">
    <text evidence="2 3">Catalyzes the ATP-dependent dehydration of threonylcarbamoyladenosine at position 37 (t(6)A37) to form cyclic t(6)A37 (ct(6)A37) in tRNAs that read codons beginning with adenine. TcdA is also part of a sulfur transfer pathway; is able to accept sulfur from CsdA directly in vitro, but CsdE might act as the sulfur donor in vivo.</text>
</comment>
<comment type="subunit">
    <text evidence="2">Interacts with CsdE.</text>
</comment>
<comment type="interaction">
    <interactant intactId="EBI-1130463">
        <id>Q46927</id>
    </interactant>
    <interactant intactId="EBI-545660">
        <id>Q46925</id>
        <label>csdA</label>
    </interactant>
    <organismsDiffer>false</organismsDiffer>
    <experiments>2</experiments>
</comment>
<comment type="interaction">
    <interactant intactId="EBI-1130463">
        <id>Q46927</id>
    </interactant>
    <interactant intactId="EBI-1130454">
        <id>P0AGF2</id>
        <label>csdE</label>
    </interactant>
    <organismsDiffer>false</organismsDiffer>
    <experiments>3</experiments>
</comment>
<comment type="subcellular location">
    <subcellularLocation>
        <location evidence="4">Membrane</location>
        <topology evidence="4">Single-pass membrane protein</topology>
    </subcellularLocation>
</comment>
<comment type="disruption phenotype">
    <text evidence="2 3">Cells lacking this gene have a normal growth phenotype, but are unable to survive in a competitive growth situation with the wild-type strain. They display only the t(6)A but not the ct(6)A modification in tRNAs, and have lower decoding efficiency than wild-type. They show no defects in motility or antibiotic sensitivity. In growth competition experiments, a tcdA mutant shows reduced fitness compared to wild-type, but outcompetes a csdA mutant.</text>
</comment>
<comment type="miscellaneous">
    <text evidence="5">ct(6)A is involved in promoting decoding efficiency. It is an unstable modification that can be easily hydrolyzed and converted to t(6)A during nucleoside preparation by conventional methods (PubMed:23242255). This explains why it was described as t(6)A37 in earlier studies.</text>
</comment>
<comment type="similarity">
    <text evidence="4">Belongs to the HesA/MoeB/ThiF family.</text>
</comment>
<evidence type="ECO:0000255" key="1"/>
<evidence type="ECO:0000269" key="2">
    <source>
    </source>
</evidence>
<evidence type="ECO:0000269" key="3">
    <source>
    </source>
</evidence>
<evidence type="ECO:0000305" key="4"/>
<evidence type="ECO:0000305" key="5">
    <source>
    </source>
</evidence>
<evidence type="ECO:0007829" key="6">
    <source>
        <dbReference type="PDB" id="4D79"/>
    </source>
</evidence>
<evidence type="ECO:0007829" key="7">
    <source>
        <dbReference type="PDB" id="4YED"/>
    </source>
</evidence>
<name>TCDA_ECOLI</name>